<evidence type="ECO:0000255" key="1">
    <source>
        <dbReference type="HAMAP-Rule" id="MF_00151"/>
    </source>
</evidence>
<name>COAD_MYCSJ</name>
<feature type="chain" id="PRO_1000011180" description="Phosphopantetheine adenylyltransferase">
    <location>
        <begin position="1"/>
        <end position="158"/>
    </location>
</feature>
<feature type="binding site" evidence="1">
    <location>
        <begin position="9"/>
        <end position="10"/>
    </location>
    <ligand>
        <name>ATP</name>
        <dbReference type="ChEBI" id="CHEBI:30616"/>
    </ligand>
</feature>
<feature type="binding site" evidence="1">
    <location>
        <position position="9"/>
    </location>
    <ligand>
        <name>substrate</name>
    </ligand>
</feature>
<feature type="binding site" evidence="1">
    <location>
        <position position="17"/>
    </location>
    <ligand>
        <name>ATP</name>
        <dbReference type="ChEBI" id="CHEBI:30616"/>
    </ligand>
</feature>
<feature type="binding site" evidence="1">
    <location>
        <position position="41"/>
    </location>
    <ligand>
        <name>substrate</name>
    </ligand>
</feature>
<feature type="binding site" evidence="1">
    <location>
        <position position="73"/>
    </location>
    <ligand>
        <name>substrate</name>
    </ligand>
</feature>
<feature type="binding site" evidence="1">
    <location>
        <position position="87"/>
    </location>
    <ligand>
        <name>substrate</name>
    </ligand>
</feature>
<feature type="binding site" evidence="1">
    <location>
        <begin position="88"/>
        <end position="90"/>
    </location>
    <ligand>
        <name>ATP</name>
        <dbReference type="ChEBI" id="CHEBI:30616"/>
    </ligand>
</feature>
<feature type="binding site" evidence="1">
    <location>
        <position position="98"/>
    </location>
    <ligand>
        <name>ATP</name>
        <dbReference type="ChEBI" id="CHEBI:30616"/>
    </ligand>
</feature>
<feature type="binding site" evidence="1">
    <location>
        <begin position="122"/>
        <end position="128"/>
    </location>
    <ligand>
        <name>ATP</name>
        <dbReference type="ChEBI" id="CHEBI:30616"/>
    </ligand>
</feature>
<feature type="site" description="Transition state stabilizer" evidence="1">
    <location>
        <position position="17"/>
    </location>
</feature>
<proteinExistence type="inferred from homology"/>
<protein>
    <recommendedName>
        <fullName evidence="1">Phosphopantetheine adenylyltransferase</fullName>
        <ecNumber evidence="1">2.7.7.3</ecNumber>
    </recommendedName>
    <alternativeName>
        <fullName evidence="1">Dephospho-CoA pyrophosphorylase</fullName>
    </alternativeName>
    <alternativeName>
        <fullName evidence="1">Pantetheine-phosphate adenylyltransferase</fullName>
        <shortName evidence="1">PPAT</shortName>
    </alternativeName>
</protein>
<keyword id="KW-0067">ATP-binding</keyword>
<keyword id="KW-0173">Coenzyme A biosynthesis</keyword>
<keyword id="KW-0963">Cytoplasm</keyword>
<keyword id="KW-0460">Magnesium</keyword>
<keyword id="KW-0547">Nucleotide-binding</keyword>
<keyword id="KW-0548">Nucleotidyltransferase</keyword>
<keyword id="KW-0808">Transferase</keyword>
<comment type="function">
    <text evidence="1">Reversibly transfers an adenylyl group from ATP to 4'-phosphopantetheine, yielding dephospho-CoA (dPCoA) and pyrophosphate.</text>
</comment>
<comment type="catalytic activity">
    <reaction evidence="1">
        <text>(R)-4'-phosphopantetheine + ATP + H(+) = 3'-dephospho-CoA + diphosphate</text>
        <dbReference type="Rhea" id="RHEA:19801"/>
        <dbReference type="ChEBI" id="CHEBI:15378"/>
        <dbReference type="ChEBI" id="CHEBI:30616"/>
        <dbReference type="ChEBI" id="CHEBI:33019"/>
        <dbReference type="ChEBI" id="CHEBI:57328"/>
        <dbReference type="ChEBI" id="CHEBI:61723"/>
        <dbReference type="EC" id="2.7.7.3"/>
    </reaction>
</comment>
<comment type="cofactor">
    <cofactor evidence="1">
        <name>Mg(2+)</name>
        <dbReference type="ChEBI" id="CHEBI:18420"/>
    </cofactor>
</comment>
<comment type="pathway">
    <text evidence="1">Cofactor biosynthesis; coenzyme A biosynthesis; CoA from (R)-pantothenate: step 4/5.</text>
</comment>
<comment type="subunit">
    <text evidence="1">Homohexamer.</text>
</comment>
<comment type="subcellular location">
    <subcellularLocation>
        <location evidence="1">Cytoplasm</location>
    </subcellularLocation>
</comment>
<comment type="similarity">
    <text evidence="1">Belongs to the bacterial CoaD family.</text>
</comment>
<reference key="1">
    <citation type="submission" date="2007-02" db="EMBL/GenBank/DDBJ databases">
        <title>Complete sequence of Mycobacterium sp. JLS.</title>
        <authorList>
            <consortium name="US DOE Joint Genome Institute"/>
            <person name="Copeland A."/>
            <person name="Lucas S."/>
            <person name="Lapidus A."/>
            <person name="Barry K."/>
            <person name="Detter J.C."/>
            <person name="Glavina del Rio T."/>
            <person name="Hammon N."/>
            <person name="Israni S."/>
            <person name="Dalin E."/>
            <person name="Tice H."/>
            <person name="Pitluck S."/>
            <person name="Chain P."/>
            <person name="Malfatti S."/>
            <person name="Shin M."/>
            <person name="Vergez L."/>
            <person name="Schmutz J."/>
            <person name="Larimer F."/>
            <person name="Land M."/>
            <person name="Hauser L."/>
            <person name="Kyrpides N."/>
            <person name="Mikhailova N."/>
            <person name="Miller C.D."/>
            <person name="Anderson A.J."/>
            <person name="Sims R.C."/>
            <person name="Richardson P."/>
        </authorList>
    </citation>
    <scope>NUCLEOTIDE SEQUENCE [LARGE SCALE GENOMIC DNA]</scope>
    <source>
        <strain>JLS</strain>
    </source>
</reference>
<accession>A3PXT6</accession>
<organism>
    <name type="scientific">Mycobacterium sp. (strain JLS)</name>
    <dbReference type="NCBI Taxonomy" id="164757"/>
    <lineage>
        <taxon>Bacteria</taxon>
        <taxon>Bacillati</taxon>
        <taxon>Actinomycetota</taxon>
        <taxon>Actinomycetes</taxon>
        <taxon>Mycobacteriales</taxon>
        <taxon>Mycobacteriaceae</taxon>
        <taxon>Mycobacterium</taxon>
    </lineage>
</organism>
<sequence length="158" mass="16955">MSGAVCPGSFDPVTLGHVDIFERAAAQFDEVVVAVLVNPNKKGMFTLDERMEMIAESCAHLPNLRVESGQGLVVDFVRARGYSAIVKGLRSSTDFEYELQMAQMNKHVAGVDTFFIASAPSYSFVSSSLAKEVATLGGDVSALLPDAVNVRLQAKLRG</sequence>
<gene>
    <name evidence="1" type="primary">coaD</name>
    <name type="ordered locus">Mjls_1925</name>
</gene>
<dbReference type="EC" id="2.7.7.3" evidence="1"/>
<dbReference type="EMBL" id="CP000580">
    <property type="protein sequence ID" value="ABN97713.1"/>
    <property type="molecule type" value="Genomic_DNA"/>
</dbReference>
<dbReference type="SMR" id="A3PXT6"/>
<dbReference type="KEGG" id="mjl:Mjls_1925"/>
<dbReference type="HOGENOM" id="CLU_100149_1_0_11"/>
<dbReference type="BioCyc" id="MSP164757:G1G8C-1945-MONOMER"/>
<dbReference type="UniPathway" id="UPA00241">
    <property type="reaction ID" value="UER00355"/>
</dbReference>
<dbReference type="GO" id="GO:0005737">
    <property type="term" value="C:cytoplasm"/>
    <property type="evidence" value="ECO:0007669"/>
    <property type="project" value="UniProtKB-SubCell"/>
</dbReference>
<dbReference type="GO" id="GO:0005524">
    <property type="term" value="F:ATP binding"/>
    <property type="evidence" value="ECO:0007669"/>
    <property type="project" value="UniProtKB-KW"/>
</dbReference>
<dbReference type="GO" id="GO:0004595">
    <property type="term" value="F:pantetheine-phosphate adenylyltransferase activity"/>
    <property type="evidence" value="ECO:0007669"/>
    <property type="project" value="UniProtKB-UniRule"/>
</dbReference>
<dbReference type="GO" id="GO:0015937">
    <property type="term" value="P:coenzyme A biosynthetic process"/>
    <property type="evidence" value="ECO:0007669"/>
    <property type="project" value="UniProtKB-UniRule"/>
</dbReference>
<dbReference type="CDD" id="cd02163">
    <property type="entry name" value="PPAT"/>
    <property type="match status" value="1"/>
</dbReference>
<dbReference type="FunFam" id="3.40.50.620:FF:000012">
    <property type="entry name" value="Phosphopantetheine adenylyltransferase"/>
    <property type="match status" value="1"/>
</dbReference>
<dbReference type="Gene3D" id="3.40.50.620">
    <property type="entry name" value="HUPs"/>
    <property type="match status" value="1"/>
</dbReference>
<dbReference type="HAMAP" id="MF_00151">
    <property type="entry name" value="PPAT_bact"/>
    <property type="match status" value="1"/>
</dbReference>
<dbReference type="InterPro" id="IPR004821">
    <property type="entry name" value="Cyt_trans-like"/>
</dbReference>
<dbReference type="InterPro" id="IPR001980">
    <property type="entry name" value="PPAT"/>
</dbReference>
<dbReference type="InterPro" id="IPR014729">
    <property type="entry name" value="Rossmann-like_a/b/a_fold"/>
</dbReference>
<dbReference type="NCBIfam" id="TIGR01510">
    <property type="entry name" value="coaD_prev_kdtB"/>
    <property type="match status" value="1"/>
</dbReference>
<dbReference type="NCBIfam" id="TIGR00125">
    <property type="entry name" value="cyt_tran_rel"/>
    <property type="match status" value="1"/>
</dbReference>
<dbReference type="PANTHER" id="PTHR21342">
    <property type="entry name" value="PHOSPHOPANTETHEINE ADENYLYLTRANSFERASE"/>
    <property type="match status" value="1"/>
</dbReference>
<dbReference type="PANTHER" id="PTHR21342:SF1">
    <property type="entry name" value="PHOSPHOPANTETHEINE ADENYLYLTRANSFERASE"/>
    <property type="match status" value="1"/>
</dbReference>
<dbReference type="Pfam" id="PF01467">
    <property type="entry name" value="CTP_transf_like"/>
    <property type="match status" value="1"/>
</dbReference>
<dbReference type="PRINTS" id="PR01020">
    <property type="entry name" value="LPSBIOSNTHSS"/>
</dbReference>
<dbReference type="SUPFAM" id="SSF52374">
    <property type="entry name" value="Nucleotidylyl transferase"/>
    <property type="match status" value="1"/>
</dbReference>